<dbReference type="EMBL" id="AY653733">
    <property type="protein sequence ID" value="AAV50367.1"/>
    <property type="molecule type" value="Genomic_DNA"/>
</dbReference>
<dbReference type="SMR" id="Q5UPG6"/>
<dbReference type="Proteomes" id="UP000001134">
    <property type="component" value="Genome"/>
</dbReference>
<dbReference type="Gene3D" id="1.25.40.20">
    <property type="entry name" value="Ankyrin repeat-containing domain"/>
    <property type="match status" value="3"/>
</dbReference>
<dbReference type="InterPro" id="IPR002110">
    <property type="entry name" value="Ankyrin_rpt"/>
</dbReference>
<dbReference type="InterPro" id="IPR036770">
    <property type="entry name" value="Ankyrin_rpt-contain_sf"/>
</dbReference>
<dbReference type="PANTHER" id="PTHR24126:SF14">
    <property type="entry name" value="ANK_REP_REGION DOMAIN-CONTAINING PROTEIN"/>
    <property type="match status" value="1"/>
</dbReference>
<dbReference type="PANTHER" id="PTHR24126">
    <property type="entry name" value="ANKYRIN REPEAT, PH AND SEC7 DOMAIN CONTAINING PROTEIN SECG-RELATED"/>
    <property type="match status" value="1"/>
</dbReference>
<dbReference type="Pfam" id="PF12796">
    <property type="entry name" value="Ank_2"/>
    <property type="match status" value="2"/>
</dbReference>
<dbReference type="SMART" id="SM00248">
    <property type="entry name" value="ANK"/>
    <property type="match status" value="7"/>
</dbReference>
<dbReference type="SUPFAM" id="SSF48403">
    <property type="entry name" value="Ankyrin repeat"/>
    <property type="match status" value="1"/>
</dbReference>
<dbReference type="PROSITE" id="PS50297">
    <property type="entry name" value="ANK_REP_REGION"/>
    <property type="match status" value="1"/>
</dbReference>
<dbReference type="PROSITE" id="PS50088">
    <property type="entry name" value="ANK_REPEAT"/>
    <property type="match status" value="4"/>
</dbReference>
<keyword id="KW-0040">ANK repeat</keyword>
<keyword id="KW-1185">Reference proteome</keyword>
<keyword id="KW-0677">Repeat</keyword>
<organism>
    <name type="scientific">Acanthamoeba polyphaga mimivirus</name>
    <name type="common">APMV</name>
    <dbReference type="NCBI Taxonomy" id="212035"/>
    <lineage>
        <taxon>Viruses</taxon>
        <taxon>Varidnaviria</taxon>
        <taxon>Bamfordvirae</taxon>
        <taxon>Nucleocytoviricota</taxon>
        <taxon>Megaviricetes</taxon>
        <taxon>Imitervirales</taxon>
        <taxon>Mimiviridae</taxon>
        <taxon>Megamimivirinae</taxon>
        <taxon>Mimivirus</taxon>
        <taxon>Mimivirus bradfordmassiliense</taxon>
    </lineage>
</organism>
<gene>
    <name type="ordered locus">MIMI_L92</name>
</gene>
<reference key="1">
    <citation type="journal article" date="2004" name="Science">
        <title>The 1.2-megabase genome sequence of Mimivirus.</title>
        <authorList>
            <person name="Raoult D."/>
            <person name="Audic S."/>
            <person name="Robert C."/>
            <person name="Abergel C."/>
            <person name="Renesto P."/>
            <person name="Ogata H."/>
            <person name="La Scola B."/>
            <person name="Susan M."/>
            <person name="Claverie J.-M."/>
        </authorList>
    </citation>
    <scope>NUCLEOTIDE SEQUENCE [LARGE SCALE GENOMIC DNA]</scope>
    <source>
        <strain>Rowbotham-Bradford</strain>
    </source>
</reference>
<organismHost>
    <name type="scientific">Acanthamoeba polyphaga</name>
    <name type="common">Amoeba</name>
    <dbReference type="NCBI Taxonomy" id="5757"/>
</organismHost>
<accession>Q5UPG6</accession>
<proteinExistence type="predicted"/>
<name>YL092_MIMIV</name>
<feature type="chain" id="PRO_0000067151" description="Putative ankyrin repeat protein L92">
    <location>
        <begin position="1"/>
        <end position="413"/>
    </location>
</feature>
<feature type="repeat" description="ANK 1">
    <location>
        <begin position="1"/>
        <end position="28"/>
    </location>
</feature>
<feature type="repeat" description="ANK 2">
    <location>
        <begin position="32"/>
        <end position="67"/>
    </location>
</feature>
<feature type="repeat" description="ANK 3">
    <location>
        <begin position="68"/>
        <end position="104"/>
    </location>
</feature>
<feature type="repeat" description="ANK 4">
    <location>
        <begin position="105"/>
        <end position="134"/>
    </location>
</feature>
<feature type="repeat" description="ANK 5">
    <location>
        <begin position="137"/>
        <end position="170"/>
    </location>
</feature>
<feature type="repeat" description="ANK 6">
    <location>
        <begin position="174"/>
        <end position="208"/>
    </location>
</feature>
<feature type="repeat" description="ANK 7">
    <location>
        <begin position="212"/>
        <end position="242"/>
    </location>
</feature>
<feature type="repeat" description="ANK 8">
    <location>
        <begin position="246"/>
        <end position="275"/>
    </location>
</feature>
<protein>
    <recommendedName>
        <fullName>Putative ankyrin repeat protein L92</fullName>
    </recommendedName>
</protein>
<sequence>MCACKFATYNSNIGAVKLLLDKGADINCMRKDGMSALSAVCKNLDLEFRSDFDTIKLLIERGADVNLTVDGHYTPLMWLIKNLSENDDRFSESKISSIKNLFESDDDDYFFENKRKNKYNALKLLLDNGANIEAKCDGETPLLLACKLSSEITSTKHIKILLKKGAKTNIESNDRKTPLMLLCKNCQQYLENEAVDVLIKYGKANINYQNSIGETALIYLCRISFMSESVQFLLEKGANPNIQDNSGNTALHYAVKRHEFEMVEILLRYNASPEIINKKGKNVFSNMHKISIGVVEQLCRYNINIQLSAAQKYSILQTPSFVNGVKLIGLIESNTKIKTIMDFTINVIPKKVLKIIYHENSLKMKLVKMAWLCRNYSIDKIITMENFWLFDYLNVETIDQLKYKITELTKYES</sequence>